<dbReference type="EC" id="2.7.1.158" evidence="2"/>
<dbReference type="EMBL" id="CR855168">
    <property type="protein sequence ID" value="CAH67064.1"/>
    <property type="molecule type" value="Genomic_DNA"/>
</dbReference>
<dbReference type="EMBL" id="CM000129">
    <property type="protein sequence ID" value="EEC78180.1"/>
    <property type="molecule type" value="Genomic_DNA"/>
</dbReference>
<dbReference type="SMR" id="B8AVX5"/>
<dbReference type="STRING" id="39946.B8AVX5"/>
<dbReference type="EnsemblPlants" id="BGIOSGA014173-TA">
    <property type="protein sequence ID" value="BGIOSGA014173-PA"/>
    <property type="gene ID" value="BGIOSGA014173"/>
</dbReference>
<dbReference type="EnsemblPlants" id="OsIR64_04g0028830.01">
    <property type="protein sequence ID" value="OsIR64_04g0028830.01"/>
    <property type="gene ID" value="OsIR64_04g0028830"/>
</dbReference>
<dbReference type="EnsemblPlants" id="OsLaMu_04g0029790.01">
    <property type="protein sequence ID" value="OsLaMu_04g0029790.01"/>
    <property type="gene ID" value="OsLaMu_04g0029790"/>
</dbReference>
<dbReference type="EnsemblPlants" id="OsMH63_04G030180_01">
    <property type="protein sequence ID" value="OsMH63_04G030180_01"/>
    <property type="gene ID" value="OsMH63_04G030180"/>
</dbReference>
<dbReference type="EnsemblPlants" id="OsMH63_04G030180_02">
    <property type="protein sequence ID" value="OsMH63_04G030180_02"/>
    <property type="gene ID" value="OsMH63_04G030180"/>
</dbReference>
<dbReference type="EnsemblPlants" id="OsMH63_04G030180_03">
    <property type="protein sequence ID" value="OsMH63_04G030180_03"/>
    <property type="gene ID" value="OsMH63_04G030180"/>
</dbReference>
<dbReference type="EnsemblPlants" id="OsPr106_04g0030180.01">
    <property type="protein sequence ID" value="OsPr106_04g0030180.01"/>
    <property type="gene ID" value="OsPr106_04g0030180"/>
</dbReference>
<dbReference type="EnsemblPlants" id="OsZS97_04G030310_01">
    <property type="protein sequence ID" value="OsZS97_04G030310_01"/>
    <property type="gene ID" value="OsZS97_04G030310"/>
</dbReference>
<dbReference type="Gramene" id="BGIOSGA014173-TA">
    <property type="protein sequence ID" value="BGIOSGA014173-PA"/>
    <property type="gene ID" value="BGIOSGA014173"/>
</dbReference>
<dbReference type="Gramene" id="OsIR64_04g0028830.01">
    <property type="protein sequence ID" value="OsIR64_04g0028830.01"/>
    <property type="gene ID" value="OsIR64_04g0028830"/>
</dbReference>
<dbReference type="Gramene" id="OsLaMu_04g0029790.01">
    <property type="protein sequence ID" value="OsLaMu_04g0029790.01"/>
    <property type="gene ID" value="OsLaMu_04g0029790"/>
</dbReference>
<dbReference type="Gramene" id="OsMH63_04G030180_01">
    <property type="protein sequence ID" value="OsMH63_04G030180_01"/>
    <property type="gene ID" value="OsMH63_04G030180"/>
</dbReference>
<dbReference type="Gramene" id="OsMH63_04G030180_02">
    <property type="protein sequence ID" value="OsMH63_04G030180_02"/>
    <property type="gene ID" value="OsMH63_04G030180"/>
</dbReference>
<dbReference type="Gramene" id="OsMH63_04G030180_03">
    <property type="protein sequence ID" value="OsMH63_04G030180_03"/>
    <property type="gene ID" value="OsMH63_04G030180"/>
</dbReference>
<dbReference type="Gramene" id="OsPr106_04g0030180.01">
    <property type="protein sequence ID" value="OsPr106_04g0030180.01"/>
    <property type="gene ID" value="OsPr106_04g0030180"/>
</dbReference>
<dbReference type="Gramene" id="OsZS97_04G030310_01">
    <property type="protein sequence ID" value="OsZS97_04G030310_01"/>
    <property type="gene ID" value="OsZS97_04G030310"/>
</dbReference>
<dbReference type="HOGENOM" id="CLU_033188_1_0_1"/>
<dbReference type="OMA" id="HRQHCIV"/>
<dbReference type="Proteomes" id="UP000007015">
    <property type="component" value="Chromosome 4"/>
</dbReference>
<dbReference type="GO" id="GO:0005634">
    <property type="term" value="C:nucleus"/>
    <property type="evidence" value="ECO:0007669"/>
    <property type="project" value="TreeGrafter"/>
</dbReference>
<dbReference type="GO" id="GO:0005524">
    <property type="term" value="F:ATP binding"/>
    <property type="evidence" value="ECO:0007669"/>
    <property type="project" value="UniProtKB-KW"/>
</dbReference>
<dbReference type="GO" id="GO:0035299">
    <property type="term" value="F:inositol-1,3,4,5,6-pentakisphosphate 2-kinase activity"/>
    <property type="evidence" value="ECO:0007669"/>
    <property type="project" value="UniProtKB-EC"/>
</dbReference>
<dbReference type="GO" id="GO:0046872">
    <property type="term" value="F:metal ion binding"/>
    <property type="evidence" value="ECO:0007669"/>
    <property type="project" value="UniProtKB-KW"/>
</dbReference>
<dbReference type="GO" id="GO:0032958">
    <property type="term" value="P:inositol phosphate biosynthetic process"/>
    <property type="evidence" value="ECO:0007669"/>
    <property type="project" value="TreeGrafter"/>
</dbReference>
<dbReference type="FunFam" id="3.30.200.110:FF:000002">
    <property type="entry name" value="Inositol-pentakisphosphate 2-kinase"/>
    <property type="match status" value="1"/>
</dbReference>
<dbReference type="Gene3D" id="3.30.200.110">
    <property type="entry name" value="Inositol-pentakisphosphate 2-kinase, N-lobe"/>
    <property type="match status" value="1"/>
</dbReference>
<dbReference type="InterPro" id="IPR009286">
    <property type="entry name" value="Ins_P5_2-kin"/>
</dbReference>
<dbReference type="InterPro" id="IPR043001">
    <property type="entry name" value="IP5_2-K_N_lobe"/>
</dbReference>
<dbReference type="PANTHER" id="PTHR14456">
    <property type="entry name" value="INOSITOL POLYPHOSPHATE KINASE 1"/>
    <property type="match status" value="1"/>
</dbReference>
<dbReference type="PANTHER" id="PTHR14456:SF2">
    <property type="entry name" value="INOSITOL-PENTAKISPHOSPHATE 2-KINASE"/>
    <property type="match status" value="1"/>
</dbReference>
<dbReference type="Pfam" id="PF06090">
    <property type="entry name" value="Ins_P5_2-kin"/>
    <property type="match status" value="1"/>
</dbReference>
<accession>B8AVX5</accession>
<accession>Q01JL1</accession>
<organism evidence="3">
    <name type="scientific">Oryza sativa subsp. indica</name>
    <name type="common">Rice</name>
    <dbReference type="NCBI Taxonomy" id="39946"/>
    <lineage>
        <taxon>Eukaryota</taxon>
        <taxon>Viridiplantae</taxon>
        <taxon>Streptophyta</taxon>
        <taxon>Embryophyta</taxon>
        <taxon>Tracheophyta</taxon>
        <taxon>Spermatophyta</taxon>
        <taxon>Magnoliopsida</taxon>
        <taxon>Liliopsida</taxon>
        <taxon>Poales</taxon>
        <taxon>Poaceae</taxon>
        <taxon>BOP clade</taxon>
        <taxon>Oryzoideae</taxon>
        <taxon>Oryzeae</taxon>
        <taxon>Oryzinae</taxon>
        <taxon>Oryza</taxon>
        <taxon>Oryza sativa</taxon>
    </lineage>
</organism>
<reference key="1">
    <citation type="journal article" date="2002" name="Nature">
        <title>Sequence and analysis of rice chromosome 4.</title>
        <authorList>
            <person name="Feng Q."/>
            <person name="Zhang Y."/>
            <person name="Hao P."/>
            <person name="Wang S."/>
            <person name="Fu G."/>
            <person name="Huang Y."/>
            <person name="Li Y."/>
            <person name="Zhu J."/>
            <person name="Liu Y."/>
            <person name="Hu X."/>
            <person name="Jia P."/>
            <person name="Zhang Y."/>
            <person name="Zhao Q."/>
            <person name="Ying K."/>
            <person name="Yu S."/>
            <person name="Tang Y."/>
            <person name="Weng Q."/>
            <person name="Zhang L."/>
            <person name="Lu Y."/>
            <person name="Mu J."/>
            <person name="Lu Y."/>
            <person name="Zhang L.S."/>
            <person name="Yu Z."/>
            <person name="Fan D."/>
            <person name="Liu X."/>
            <person name="Lu T."/>
            <person name="Li C."/>
            <person name="Wu Y."/>
            <person name="Sun T."/>
            <person name="Lei H."/>
            <person name="Li T."/>
            <person name="Hu H."/>
            <person name="Guan J."/>
            <person name="Wu M."/>
            <person name="Zhang R."/>
            <person name="Zhou B."/>
            <person name="Chen Z."/>
            <person name="Chen L."/>
            <person name="Jin Z."/>
            <person name="Wang R."/>
            <person name="Yin H."/>
            <person name="Cai Z."/>
            <person name="Ren S."/>
            <person name="Lv G."/>
            <person name="Gu W."/>
            <person name="Zhu G."/>
            <person name="Tu Y."/>
            <person name="Jia J."/>
            <person name="Zhang Y."/>
            <person name="Chen J."/>
            <person name="Kang H."/>
            <person name="Chen X."/>
            <person name="Shao C."/>
            <person name="Sun Y."/>
            <person name="Hu Q."/>
            <person name="Zhang X."/>
            <person name="Zhang W."/>
            <person name="Wang L."/>
            <person name="Ding C."/>
            <person name="Sheng H."/>
            <person name="Gu J."/>
            <person name="Chen S."/>
            <person name="Ni L."/>
            <person name="Zhu F."/>
            <person name="Chen W."/>
            <person name="Lan L."/>
            <person name="Lai Y."/>
            <person name="Cheng Z."/>
            <person name="Gu M."/>
            <person name="Jiang J."/>
            <person name="Li J."/>
            <person name="Hong G."/>
            <person name="Xue Y."/>
            <person name="Han B."/>
        </authorList>
    </citation>
    <scope>NUCLEOTIDE SEQUENCE [LARGE SCALE GENOMIC DNA]</scope>
    <source>
        <strain>cv. Guang-Lu-Ai No.4</strain>
    </source>
</reference>
<reference key="2">
    <citation type="journal article" date="2005" name="PLoS Biol.">
        <title>The genomes of Oryza sativa: a history of duplications.</title>
        <authorList>
            <person name="Yu J."/>
            <person name="Wang J."/>
            <person name="Lin W."/>
            <person name="Li S."/>
            <person name="Li H."/>
            <person name="Zhou J."/>
            <person name="Ni P."/>
            <person name="Dong W."/>
            <person name="Hu S."/>
            <person name="Zeng C."/>
            <person name="Zhang J."/>
            <person name="Zhang Y."/>
            <person name="Li R."/>
            <person name="Xu Z."/>
            <person name="Li S."/>
            <person name="Li X."/>
            <person name="Zheng H."/>
            <person name="Cong L."/>
            <person name="Lin L."/>
            <person name="Yin J."/>
            <person name="Geng J."/>
            <person name="Li G."/>
            <person name="Shi J."/>
            <person name="Liu J."/>
            <person name="Lv H."/>
            <person name="Li J."/>
            <person name="Wang J."/>
            <person name="Deng Y."/>
            <person name="Ran L."/>
            <person name="Shi X."/>
            <person name="Wang X."/>
            <person name="Wu Q."/>
            <person name="Li C."/>
            <person name="Ren X."/>
            <person name="Wang J."/>
            <person name="Wang X."/>
            <person name="Li D."/>
            <person name="Liu D."/>
            <person name="Zhang X."/>
            <person name="Ji Z."/>
            <person name="Zhao W."/>
            <person name="Sun Y."/>
            <person name="Zhang Z."/>
            <person name="Bao J."/>
            <person name="Han Y."/>
            <person name="Dong L."/>
            <person name="Ji J."/>
            <person name="Chen P."/>
            <person name="Wu S."/>
            <person name="Liu J."/>
            <person name="Xiao Y."/>
            <person name="Bu D."/>
            <person name="Tan J."/>
            <person name="Yang L."/>
            <person name="Ye C."/>
            <person name="Zhang J."/>
            <person name="Xu J."/>
            <person name="Zhou Y."/>
            <person name="Yu Y."/>
            <person name="Zhang B."/>
            <person name="Zhuang S."/>
            <person name="Wei H."/>
            <person name="Liu B."/>
            <person name="Lei M."/>
            <person name="Yu H."/>
            <person name="Li Y."/>
            <person name="Xu H."/>
            <person name="Wei S."/>
            <person name="He X."/>
            <person name="Fang L."/>
            <person name="Zhang Z."/>
            <person name="Zhang Y."/>
            <person name="Huang X."/>
            <person name="Su Z."/>
            <person name="Tong W."/>
            <person name="Li J."/>
            <person name="Tong Z."/>
            <person name="Li S."/>
            <person name="Ye J."/>
            <person name="Wang L."/>
            <person name="Fang L."/>
            <person name="Lei T."/>
            <person name="Chen C.-S."/>
            <person name="Chen H.-C."/>
            <person name="Xu Z."/>
            <person name="Li H."/>
            <person name="Huang H."/>
            <person name="Zhang F."/>
            <person name="Xu H."/>
            <person name="Li N."/>
            <person name="Zhao C."/>
            <person name="Li S."/>
            <person name="Dong L."/>
            <person name="Huang Y."/>
            <person name="Li L."/>
            <person name="Xi Y."/>
            <person name="Qi Q."/>
            <person name="Li W."/>
            <person name="Zhang B."/>
            <person name="Hu W."/>
            <person name="Zhang Y."/>
            <person name="Tian X."/>
            <person name="Jiao Y."/>
            <person name="Liang X."/>
            <person name="Jin J."/>
            <person name="Gao L."/>
            <person name="Zheng W."/>
            <person name="Hao B."/>
            <person name="Liu S.-M."/>
            <person name="Wang W."/>
            <person name="Yuan L."/>
            <person name="Cao M."/>
            <person name="McDermott J."/>
            <person name="Samudrala R."/>
            <person name="Wang J."/>
            <person name="Wong G.K.-S."/>
            <person name="Yang H."/>
        </authorList>
    </citation>
    <scope>NUCLEOTIDE SEQUENCE [LARGE SCALE GENOMIC DNA]</scope>
    <source>
        <strain>cv. 93-11</strain>
    </source>
</reference>
<evidence type="ECO:0000250" key="1">
    <source>
        <dbReference type="UniProtKB" id="Q93YN9"/>
    </source>
</evidence>
<evidence type="ECO:0000305" key="2"/>
<evidence type="ECO:0000312" key="3">
    <source>
        <dbReference type="EMBL" id="EEC78180.1"/>
    </source>
</evidence>
<keyword id="KW-0067">ATP-binding</keyword>
<keyword id="KW-0418">Kinase</keyword>
<keyword id="KW-0479">Metal-binding</keyword>
<keyword id="KW-0547">Nucleotide-binding</keyword>
<keyword id="KW-1185">Reference proteome</keyword>
<keyword id="KW-0808">Transferase</keyword>
<keyword id="KW-0862">Zinc</keyword>
<sequence length="445" mass="49336">MEVVLHEGDAKDWVYKGEGAANLILSYTGSSPSMLGKVLRVKKILKDKGQPAPNCIVFSSHEEHLWGKIPGLLESVKNDCLPQAYATIVMSQHLGANHVDGGVRVRVSKNFFELAGKNVLDNRPAWRVNASAIDAGADSALLISDHTLFSGNPRGSSCIAVEIKAKCGFLPSSEYISKENSIKKQVTRYKMHQHLKFHLGEISKTSEYDPLDLFSGSKERIHMAIKSFFSTPQNNFRIFVDGSLVFGGMGGGADSVHPNETEKCLEDLSKVTGLQLSDFIELLSEAIFKSGVLGKLLATQKLDDHDIEGAIHLYYNIISQPCLVCKSITDTELLRKYSTLHSLPLDKSEKIVRDFLISATAKDCSLMISFRPRQSGTTDSEYDSVFLDSVNQSYDYKAYFIDLDVKPLDKMVHYFKLDQKIVNFYTRNGEVGGDPRDPPKGCGPR</sequence>
<name>IPK1_ORYSI</name>
<feature type="chain" id="PRO_0000431882" description="Inositol-pentakisphosphate 2-kinase IPK1">
    <location>
        <begin position="1"/>
        <end position="445"/>
    </location>
</feature>
<feature type="short sequence motif" description="EXKPK motif" evidence="1">
    <location>
        <begin position="162"/>
        <end position="166"/>
    </location>
</feature>
<feature type="binding site" evidence="1">
    <location>
        <begin position="19"/>
        <end position="22"/>
    </location>
    <ligand>
        <name>ATP</name>
        <dbReference type="ChEBI" id="CHEBI:30616"/>
    </ligand>
</feature>
<feature type="binding site" evidence="1">
    <location>
        <position position="40"/>
    </location>
    <ligand>
        <name>ATP</name>
        <dbReference type="ChEBI" id="CHEBI:30616"/>
    </ligand>
</feature>
<feature type="binding site" evidence="1">
    <location>
        <position position="127"/>
    </location>
    <ligand>
        <name>substrate</name>
    </ligand>
</feature>
<feature type="binding site" evidence="1">
    <location>
        <begin position="144"/>
        <end position="146"/>
    </location>
    <ligand>
        <name>ATP</name>
        <dbReference type="ChEBI" id="CHEBI:30616"/>
    </ligand>
</feature>
<feature type="binding site" evidence="1">
    <location>
        <begin position="162"/>
        <end position="164"/>
    </location>
    <ligand>
        <name>ATP</name>
        <dbReference type="ChEBI" id="CHEBI:30616"/>
    </ligand>
</feature>
<feature type="binding site" evidence="1">
    <location>
        <position position="166"/>
    </location>
    <ligand>
        <name>substrate</name>
    </ligand>
</feature>
<feature type="binding site" evidence="1">
    <location>
        <position position="196"/>
    </location>
    <ligand>
        <name>substrate</name>
    </ligand>
</feature>
<feature type="binding site" evidence="1">
    <location>
        <position position="234"/>
    </location>
    <ligand>
        <name>substrate</name>
    </ligand>
</feature>
<feature type="binding site" evidence="1">
    <location>
        <position position="237"/>
    </location>
    <ligand>
        <name>ATP</name>
        <dbReference type="ChEBI" id="CHEBI:30616"/>
    </ligand>
</feature>
<feature type="binding site" evidence="1">
    <location>
        <position position="312"/>
    </location>
    <ligand>
        <name>Zn(2+)</name>
        <dbReference type="ChEBI" id="CHEBI:29105"/>
    </ligand>
</feature>
<feature type="binding site" evidence="1">
    <location>
        <position position="322"/>
    </location>
    <ligand>
        <name>Zn(2+)</name>
        <dbReference type="ChEBI" id="CHEBI:29105"/>
    </ligand>
</feature>
<feature type="binding site" evidence="1">
    <location>
        <position position="325"/>
    </location>
    <ligand>
        <name>Zn(2+)</name>
        <dbReference type="ChEBI" id="CHEBI:29105"/>
    </ligand>
</feature>
<feature type="binding site" evidence="1">
    <location>
        <position position="341"/>
    </location>
    <ligand>
        <name>Zn(2+)</name>
        <dbReference type="ChEBI" id="CHEBI:29105"/>
    </ligand>
</feature>
<feature type="binding site" evidence="1">
    <location>
        <position position="363"/>
    </location>
    <ligand>
        <name>substrate</name>
    </ligand>
</feature>
<feature type="binding site" evidence="1">
    <location>
        <position position="402"/>
    </location>
    <ligand>
        <name>ATP</name>
        <dbReference type="ChEBI" id="CHEBI:30616"/>
    </ligand>
</feature>
<feature type="binding site" evidence="1">
    <location>
        <position position="406"/>
    </location>
    <ligand>
        <name>substrate</name>
    </ligand>
</feature>
<feature type="binding site" evidence="1">
    <location>
        <position position="410"/>
    </location>
    <ligand>
        <name>substrate</name>
    </ligand>
</feature>
<feature type="binding site" evidence="1">
    <location>
        <position position="414"/>
    </location>
    <ligand>
        <name>substrate</name>
    </ligand>
</feature>
<feature type="sequence conflict" description="In Ref. 1; CAH67064." evidence="2" ref="1">
    <original>T</original>
    <variation>A</variation>
    <location>
        <position position="205"/>
    </location>
</feature>
<protein>
    <recommendedName>
        <fullName evidence="2">Inositol-pentakisphosphate 2-kinase IPK1</fullName>
        <ecNumber evidence="2">2.7.1.158</ecNumber>
    </recommendedName>
    <alternativeName>
        <fullName evidence="2">Inositol-1,3,4,5,6-pentakisphosphate 2-kinase IPK1</fullName>
        <shortName evidence="2">OsIPK1</shortName>
    </alternativeName>
    <alternativeName>
        <fullName evidence="2">Ins(1,3,4,5,6)P5 2-kinase</fullName>
        <shortName>InsP5 2-kinase</shortName>
    </alternativeName>
</protein>
<proteinExistence type="inferred from homology"/>
<gene>
    <name evidence="2" type="primary">IPK1</name>
    <name evidence="3" type="ORF">OsI_17777</name>
</gene>
<comment type="function">
    <text evidence="1">Phosphorylates Ins(1,3,4,5,6)P5 at position 2 to form Ins(1,2,3,4,5,6)P6 (InsP6 or phytate). Phytate is a regulator of intracellular signaling, a highly abundant animal antinutrient, and a phosphate store in plant seeds. Also phosphorylates Ins(1,3,4,6)P4 and Ins(1,4,5,6)P4 to produce Ins(1,2,3,4,6)P5 and Ins(1,2,4,5,6)P5.</text>
</comment>
<comment type="catalytic activity">
    <reaction evidence="1">
        <text>1D-myo-inositol 1,3,4,5,6-pentakisphosphate + ATP = 1D-myo-inositol hexakisphosphate + ADP + H(+)</text>
        <dbReference type="Rhea" id="RHEA:20313"/>
        <dbReference type="ChEBI" id="CHEBI:15378"/>
        <dbReference type="ChEBI" id="CHEBI:30616"/>
        <dbReference type="ChEBI" id="CHEBI:57733"/>
        <dbReference type="ChEBI" id="CHEBI:58130"/>
        <dbReference type="ChEBI" id="CHEBI:456216"/>
        <dbReference type="EC" id="2.7.1.158"/>
    </reaction>
</comment>
<comment type="cofactor">
    <cofactor evidence="1">
        <name>Zn(2+)</name>
        <dbReference type="ChEBI" id="CHEBI:29105"/>
    </cofactor>
    <text evidence="1">Binds 1 zinc ion per subunit.</text>
</comment>
<comment type="domain">
    <text evidence="1">The EXKPK motif is conserved in inositol-pentakisphosphate 2-kinases of both family 1 and 2.</text>
</comment>
<comment type="similarity">
    <text evidence="2">Belongs to the IPK1 type 2 family.</text>
</comment>